<keyword id="KW-0028">Amino-acid biosynthesis</keyword>
<keyword id="KW-0057">Aromatic amino acid biosynthesis</keyword>
<keyword id="KW-0456">Lyase</keyword>
<keyword id="KW-1185">Reference proteome</keyword>
<sequence>MPRTRTLANAPIMILNGPNLNLLGQRQPEIYGSDTLADVEALCAKAAAAHGGTVDFRQSNHEGELVDWIHEARLHHVGIVINPAAYSHTSVAILDALNTCDGLPVVEVHISNIHQREEFRHHSYVSLRADGVIAGCGVQGYAFAVERVAALAETGRADA</sequence>
<protein>
    <recommendedName>
        <fullName evidence="1">3-dehydroquinate dehydratase</fullName>
        <shortName evidence="1">3-dehydroquinase</shortName>
        <ecNumber evidence="1">4.2.1.10</ecNumber>
    </recommendedName>
    <alternativeName>
        <fullName evidence="1">Type II DHQase</fullName>
    </alternativeName>
</protein>
<reference key="1">
    <citation type="journal article" date="2001" name="Proc. Natl. Acad. Sci. U.S.A.">
        <title>Genome sequence of an industrial microorganism Streptomyces avermitilis: deducing the ability of producing secondary metabolites.</title>
        <authorList>
            <person name="Omura S."/>
            <person name="Ikeda H."/>
            <person name="Ishikawa J."/>
            <person name="Hanamoto A."/>
            <person name="Takahashi C."/>
            <person name="Shinose M."/>
            <person name="Takahashi Y."/>
            <person name="Horikawa H."/>
            <person name="Nakazawa H."/>
            <person name="Osonoe T."/>
            <person name="Kikuchi H."/>
            <person name="Shiba T."/>
            <person name="Sakaki Y."/>
            <person name="Hattori M."/>
        </authorList>
    </citation>
    <scope>NUCLEOTIDE SEQUENCE [LARGE SCALE GENOMIC DNA]</scope>
    <source>
        <strain>ATCC 31267 / DSM 46492 / JCM 5070 / NBRC 14893 / NCIMB 12804 / NRRL 8165 / MA-4680</strain>
    </source>
</reference>
<reference key="2">
    <citation type="journal article" date="2003" name="Nat. Biotechnol.">
        <title>Complete genome sequence and comparative analysis of the industrial microorganism Streptomyces avermitilis.</title>
        <authorList>
            <person name="Ikeda H."/>
            <person name="Ishikawa J."/>
            <person name="Hanamoto A."/>
            <person name="Shinose M."/>
            <person name="Kikuchi H."/>
            <person name="Shiba T."/>
            <person name="Sakaki Y."/>
            <person name="Hattori M."/>
            <person name="Omura S."/>
        </authorList>
    </citation>
    <scope>NUCLEOTIDE SEQUENCE [LARGE SCALE GENOMIC DNA]</scope>
    <source>
        <strain>ATCC 31267 / DSM 46492 / JCM 5070 / NBRC 14893 / NCIMB 12804 / NRRL 8165 / MA-4680</strain>
    </source>
</reference>
<accession>Q829X9</accession>
<name>AROQ_STRAW</name>
<evidence type="ECO:0000255" key="1">
    <source>
        <dbReference type="HAMAP-Rule" id="MF_00169"/>
    </source>
</evidence>
<comment type="function">
    <text evidence="1">Catalyzes a trans-dehydration via an enolate intermediate.</text>
</comment>
<comment type="catalytic activity">
    <reaction evidence="1">
        <text>3-dehydroquinate = 3-dehydroshikimate + H2O</text>
        <dbReference type="Rhea" id="RHEA:21096"/>
        <dbReference type="ChEBI" id="CHEBI:15377"/>
        <dbReference type="ChEBI" id="CHEBI:16630"/>
        <dbReference type="ChEBI" id="CHEBI:32364"/>
        <dbReference type="EC" id="4.2.1.10"/>
    </reaction>
</comment>
<comment type="pathway">
    <text evidence="1">Metabolic intermediate biosynthesis; chorismate biosynthesis; chorismate from D-erythrose 4-phosphate and phosphoenolpyruvate: step 3/7.</text>
</comment>
<comment type="subunit">
    <text evidence="1">Homododecamer.</text>
</comment>
<comment type="similarity">
    <text evidence="1">Belongs to the type-II 3-dehydroquinase family.</text>
</comment>
<proteinExistence type="inferred from homology"/>
<organism>
    <name type="scientific">Streptomyces avermitilis (strain ATCC 31267 / DSM 46492 / JCM 5070 / NBRC 14893 / NCIMB 12804 / NRRL 8165 / MA-4680)</name>
    <dbReference type="NCBI Taxonomy" id="227882"/>
    <lineage>
        <taxon>Bacteria</taxon>
        <taxon>Bacillati</taxon>
        <taxon>Actinomycetota</taxon>
        <taxon>Actinomycetes</taxon>
        <taxon>Kitasatosporales</taxon>
        <taxon>Streptomycetaceae</taxon>
        <taxon>Streptomyces</taxon>
    </lineage>
</organism>
<gene>
    <name evidence="1" type="primary">aroQ</name>
    <name type="ordered locus">SAV_6280</name>
</gene>
<feature type="chain" id="PRO_0000159929" description="3-dehydroquinate dehydratase">
    <location>
        <begin position="1"/>
        <end position="159"/>
    </location>
</feature>
<feature type="active site" description="Proton acceptor" evidence="1">
    <location>
        <position position="31"/>
    </location>
</feature>
<feature type="active site" description="Proton donor" evidence="1">
    <location>
        <position position="109"/>
    </location>
</feature>
<feature type="binding site" evidence="1">
    <location>
        <position position="82"/>
    </location>
    <ligand>
        <name>substrate</name>
    </ligand>
</feature>
<feature type="binding site" evidence="1">
    <location>
        <position position="88"/>
    </location>
    <ligand>
        <name>substrate</name>
    </ligand>
</feature>
<feature type="binding site" evidence="1">
    <location>
        <position position="95"/>
    </location>
    <ligand>
        <name>substrate</name>
    </ligand>
</feature>
<feature type="binding site" evidence="1">
    <location>
        <begin position="110"/>
        <end position="111"/>
    </location>
    <ligand>
        <name>substrate</name>
    </ligand>
</feature>
<feature type="binding site" evidence="1">
    <location>
        <position position="120"/>
    </location>
    <ligand>
        <name>substrate</name>
    </ligand>
</feature>
<feature type="site" description="Transition state stabilizer" evidence="1">
    <location>
        <position position="26"/>
    </location>
</feature>
<dbReference type="EC" id="4.2.1.10" evidence="1"/>
<dbReference type="EMBL" id="BA000030">
    <property type="protein sequence ID" value="BAC73991.1"/>
    <property type="molecule type" value="Genomic_DNA"/>
</dbReference>
<dbReference type="SMR" id="Q829X9"/>
<dbReference type="KEGG" id="sma:SAVERM_6280"/>
<dbReference type="eggNOG" id="COG0757">
    <property type="taxonomic scope" value="Bacteria"/>
</dbReference>
<dbReference type="HOGENOM" id="CLU_090968_2_0_11"/>
<dbReference type="UniPathway" id="UPA00053">
    <property type="reaction ID" value="UER00086"/>
</dbReference>
<dbReference type="Proteomes" id="UP000000428">
    <property type="component" value="Chromosome"/>
</dbReference>
<dbReference type="GO" id="GO:0003855">
    <property type="term" value="F:3-dehydroquinate dehydratase activity"/>
    <property type="evidence" value="ECO:0007669"/>
    <property type="project" value="UniProtKB-UniRule"/>
</dbReference>
<dbReference type="GO" id="GO:0008652">
    <property type="term" value="P:amino acid biosynthetic process"/>
    <property type="evidence" value="ECO:0007669"/>
    <property type="project" value="UniProtKB-KW"/>
</dbReference>
<dbReference type="GO" id="GO:0009073">
    <property type="term" value="P:aromatic amino acid family biosynthetic process"/>
    <property type="evidence" value="ECO:0007669"/>
    <property type="project" value="UniProtKB-KW"/>
</dbReference>
<dbReference type="GO" id="GO:0009423">
    <property type="term" value="P:chorismate biosynthetic process"/>
    <property type="evidence" value="ECO:0007669"/>
    <property type="project" value="UniProtKB-UniRule"/>
</dbReference>
<dbReference type="GO" id="GO:0019631">
    <property type="term" value="P:quinate catabolic process"/>
    <property type="evidence" value="ECO:0007669"/>
    <property type="project" value="TreeGrafter"/>
</dbReference>
<dbReference type="CDD" id="cd00466">
    <property type="entry name" value="DHQase_II"/>
    <property type="match status" value="1"/>
</dbReference>
<dbReference type="Gene3D" id="3.40.50.9100">
    <property type="entry name" value="Dehydroquinase, class II"/>
    <property type="match status" value="1"/>
</dbReference>
<dbReference type="HAMAP" id="MF_00169">
    <property type="entry name" value="AroQ"/>
    <property type="match status" value="1"/>
</dbReference>
<dbReference type="InterPro" id="IPR001874">
    <property type="entry name" value="DHquinase_II"/>
</dbReference>
<dbReference type="InterPro" id="IPR018509">
    <property type="entry name" value="DHquinase_II_CS"/>
</dbReference>
<dbReference type="InterPro" id="IPR036441">
    <property type="entry name" value="DHquinase_II_sf"/>
</dbReference>
<dbReference type="NCBIfam" id="TIGR01088">
    <property type="entry name" value="aroQ"/>
    <property type="match status" value="1"/>
</dbReference>
<dbReference type="NCBIfam" id="NF003805">
    <property type="entry name" value="PRK05395.1-2"/>
    <property type="match status" value="1"/>
</dbReference>
<dbReference type="NCBIfam" id="NF003806">
    <property type="entry name" value="PRK05395.1-3"/>
    <property type="match status" value="1"/>
</dbReference>
<dbReference type="NCBIfam" id="NF003807">
    <property type="entry name" value="PRK05395.1-4"/>
    <property type="match status" value="1"/>
</dbReference>
<dbReference type="PANTHER" id="PTHR21272">
    <property type="entry name" value="CATABOLIC 3-DEHYDROQUINASE"/>
    <property type="match status" value="1"/>
</dbReference>
<dbReference type="PANTHER" id="PTHR21272:SF3">
    <property type="entry name" value="CATABOLIC 3-DEHYDROQUINASE"/>
    <property type="match status" value="1"/>
</dbReference>
<dbReference type="Pfam" id="PF01220">
    <property type="entry name" value="DHquinase_II"/>
    <property type="match status" value="1"/>
</dbReference>
<dbReference type="PIRSF" id="PIRSF001399">
    <property type="entry name" value="DHquinase_II"/>
    <property type="match status" value="1"/>
</dbReference>
<dbReference type="SUPFAM" id="SSF52304">
    <property type="entry name" value="Type II 3-dehydroquinate dehydratase"/>
    <property type="match status" value="1"/>
</dbReference>
<dbReference type="PROSITE" id="PS01029">
    <property type="entry name" value="DEHYDROQUINASE_II"/>
    <property type="match status" value="1"/>
</dbReference>